<name>KATG_VIBCH</name>
<keyword id="KW-0349">Heme</keyword>
<keyword id="KW-0376">Hydrogen peroxide</keyword>
<keyword id="KW-0408">Iron</keyword>
<keyword id="KW-0479">Metal-binding</keyword>
<keyword id="KW-0560">Oxidoreductase</keyword>
<keyword id="KW-0575">Peroxidase</keyword>
<keyword id="KW-1185">Reference proteome</keyword>
<organism>
    <name type="scientific">Vibrio cholerae serotype O1 (strain ATCC 39315 / El Tor Inaba N16961)</name>
    <dbReference type="NCBI Taxonomy" id="243277"/>
    <lineage>
        <taxon>Bacteria</taxon>
        <taxon>Pseudomonadati</taxon>
        <taxon>Pseudomonadota</taxon>
        <taxon>Gammaproteobacteria</taxon>
        <taxon>Vibrionales</taxon>
        <taxon>Vibrionaceae</taxon>
        <taxon>Vibrio</taxon>
    </lineage>
</organism>
<dbReference type="EC" id="1.11.1.21" evidence="1"/>
<dbReference type="EMBL" id="AE003852">
    <property type="protein sequence ID" value="AAF94714.1"/>
    <property type="molecule type" value="Genomic_DNA"/>
</dbReference>
<dbReference type="PIR" id="B82186">
    <property type="entry name" value="B82186"/>
</dbReference>
<dbReference type="RefSeq" id="NP_231200.1">
    <property type="nucleotide sequence ID" value="NC_002505.1"/>
</dbReference>
<dbReference type="RefSeq" id="WP_000400805.1">
    <property type="nucleotide sequence ID" value="NZ_LT906614.1"/>
</dbReference>
<dbReference type="SMR" id="Q9KRS6"/>
<dbReference type="STRING" id="243277.VC_1560"/>
<dbReference type="PeroxiBase" id="2445">
    <property type="entry name" value="VchCP01_N16961"/>
</dbReference>
<dbReference type="DNASU" id="2613939"/>
<dbReference type="EnsemblBacteria" id="AAF94714">
    <property type="protein sequence ID" value="AAF94714"/>
    <property type="gene ID" value="VC_1560"/>
</dbReference>
<dbReference type="KEGG" id="vch:VC_1560"/>
<dbReference type="PATRIC" id="fig|243277.26.peg.1488"/>
<dbReference type="eggNOG" id="COG0376">
    <property type="taxonomic scope" value="Bacteria"/>
</dbReference>
<dbReference type="HOGENOM" id="CLU_025424_2_0_6"/>
<dbReference type="Proteomes" id="UP000000584">
    <property type="component" value="Chromosome 1"/>
</dbReference>
<dbReference type="GO" id="GO:0005829">
    <property type="term" value="C:cytosol"/>
    <property type="evidence" value="ECO:0000318"/>
    <property type="project" value="GO_Central"/>
</dbReference>
<dbReference type="GO" id="GO:0004096">
    <property type="term" value="F:catalase activity"/>
    <property type="evidence" value="ECO:0000318"/>
    <property type="project" value="GO_Central"/>
</dbReference>
<dbReference type="GO" id="GO:0020037">
    <property type="term" value="F:heme binding"/>
    <property type="evidence" value="ECO:0000318"/>
    <property type="project" value="GO_Central"/>
</dbReference>
<dbReference type="GO" id="GO:0046872">
    <property type="term" value="F:metal ion binding"/>
    <property type="evidence" value="ECO:0007669"/>
    <property type="project" value="UniProtKB-KW"/>
</dbReference>
<dbReference type="GO" id="GO:0070301">
    <property type="term" value="P:cellular response to hydrogen peroxide"/>
    <property type="evidence" value="ECO:0000318"/>
    <property type="project" value="GO_Central"/>
</dbReference>
<dbReference type="GO" id="GO:0042744">
    <property type="term" value="P:hydrogen peroxide catabolic process"/>
    <property type="evidence" value="ECO:0000318"/>
    <property type="project" value="GO_Central"/>
</dbReference>
<dbReference type="CDD" id="cd00649">
    <property type="entry name" value="catalase_peroxidase_1"/>
    <property type="match status" value="1"/>
</dbReference>
<dbReference type="CDD" id="cd08200">
    <property type="entry name" value="catalase_peroxidase_2"/>
    <property type="match status" value="1"/>
</dbReference>
<dbReference type="FunFam" id="1.10.420.10:FF:000002">
    <property type="entry name" value="Catalase-peroxidase"/>
    <property type="match status" value="1"/>
</dbReference>
<dbReference type="FunFam" id="1.10.420.10:FF:000004">
    <property type="entry name" value="Catalase-peroxidase"/>
    <property type="match status" value="1"/>
</dbReference>
<dbReference type="FunFam" id="1.10.520.10:FF:000002">
    <property type="entry name" value="Catalase-peroxidase"/>
    <property type="match status" value="1"/>
</dbReference>
<dbReference type="Gene3D" id="1.10.520.10">
    <property type="match status" value="2"/>
</dbReference>
<dbReference type="Gene3D" id="1.10.420.10">
    <property type="entry name" value="Peroxidase, domain 2"/>
    <property type="match status" value="2"/>
</dbReference>
<dbReference type="HAMAP" id="MF_01961">
    <property type="entry name" value="Catal_peroxid"/>
    <property type="match status" value="1"/>
</dbReference>
<dbReference type="InterPro" id="IPR000763">
    <property type="entry name" value="Catalase_peroxidase"/>
</dbReference>
<dbReference type="InterPro" id="IPR002016">
    <property type="entry name" value="Haem_peroxidase"/>
</dbReference>
<dbReference type="InterPro" id="IPR010255">
    <property type="entry name" value="Haem_peroxidase_sf"/>
</dbReference>
<dbReference type="InterPro" id="IPR019794">
    <property type="entry name" value="Peroxidases_AS"/>
</dbReference>
<dbReference type="NCBIfam" id="TIGR00198">
    <property type="entry name" value="cat_per_HPI"/>
    <property type="match status" value="1"/>
</dbReference>
<dbReference type="NCBIfam" id="NF011635">
    <property type="entry name" value="PRK15061.1"/>
    <property type="match status" value="1"/>
</dbReference>
<dbReference type="PANTHER" id="PTHR30555:SF6">
    <property type="entry name" value="CATALASE-PEROXIDASE"/>
    <property type="match status" value="1"/>
</dbReference>
<dbReference type="PANTHER" id="PTHR30555">
    <property type="entry name" value="HYDROPEROXIDASE I, BIFUNCTIONAL CATALASE-PEROXIDASE"/>
    <property type="match status" value="1"/>
</dbReference>
<dbReference type="Pfam" id="PF00141">
    <property type="entry name" value="peroxidase"/>
    <property type="match status" value="2"/>
</dbReference>
<dbReference type="PRINTS" id="PR00460">
    <property type="entry name" value="BPEROXIDASE"/>
</dbReference>
<dbReference type="PRINTS" id="PR00458">
    <property type="entry name" value="PEROXIDASE"/>
</dbReference>
<dbReference type="SUPFAM" id="SSF48113">
    <property type="entry name" value="Heme-dependent peroxidases"/>
    <property type="match status" value="2"/>
</dbReference>
<dbReference type="PROSITE" id="PS00436">
    <property type="entry name" value="PEROXIDASE_2"/>
    <property type="match status" value="1"/>
</dbReference>
<dbReference type="PROSITE" id="PS50873">
    <property type="entry name" value="PEROXIDASE_4"/>
    <property type="match status" value="1"/>
</dbReference>
<gene>
    <name evidence="1" type="primary">katG</name>
    <name type="ordered locus">VC_1560</name>
</gene>
<accession>Q9KRS6</accession>
<protein>
    <recommendedName>
        <fullName evidence="1">Catalase-peroxidase</fullName>
        <shortName evidence="1">CP</shortName>
        <ecNumber evidence="1">1.11.1.21</ecNumber>
    </recommendedName>
    <alternativeName>
        <fullName evidence="1">Peroxidase/catalase</fullName>
    </alternativeName>
</protein>
<feature type="chain" id="PRO_0000354947" description="Catalase-peroxidase">
    <location>
        <begin position="1"/>
        <end position="724"/>
    </location>
</feature>
<feature type="active site" description="Proton acceptor" evidence="1">
    <location>
        <position position="99"/>
    </location>
</feature>
<feature type="binding site" description="axial binding residue" evidence="1">
    <location>
        <position position="267"/>
    </location>
    <ligand>
        <name>heme b</name>
        <dbReference type="ChEBI" id="CHEBI:60344"/>
    </ligand>
    <ligandPart>
        <name>Fe</name>
        <dbReference type="ChEBI" id="CHEBI:18248"/>
    </ligandPart>
</feature>
<feature type="site" description="Transition state stabilizer" evidence="1">
    <location>
        <position position="95"/>
    </location>
</feature>
<feature type="cross-link" description="Tryptophyl-tyrosyl-methioninium (Trp-Tyr) (with M-252)" evidence="1">
    <location>
        <begin position="98"/>
        <end position="226"/>
    </location>
</feature>
<feature type="cross-link" description="Tryptophyl-tyrosyl-methioninium (Tyr-Met) (with W-98)" evidence="1">
    <location>
        <begin position="226"/>
        <end position="252"/>
    </location>
</feature>
<comment type="function">
    <text evidence="1">Bifunctional enzyme with both catalase and broad-spectrum peroxidase activity.</text>
</comment>
<comment type="catalytic activity">
    <reaction evidence="1">
        <text>H2O2 + AH2 = A + 2 H2O</text>
        <dbReference type="Rhea" id="RHEA:30275"/>
        <dbReference type="ChEBI" id="CHEBI:13193"/>
        <dbReference type="ChEBI" id="CHEBI:15377"/>
        <dbReference type="ChEBI" id="CHEBI:16240"/>
        <dbReference type="ChEBI" id="CHEBI:17499"/>
        <dbReference type="EC" id="1.11.1.21"/>
    </reaction>
</comment>
<comment type="catalytic activity">
    <reaction evidence="1">
        <text>2 H2O2 = O2 + 2 H2O</text>
        <dbReference type="Rhea" id="RHEA:20309"/>
        <dbReference type="ChEBI" id="CHEBI:15377"/>
        <dbReference type="ChEBI" id="CHEBI:15379"/>
        <dbReference type="ChEBI" id="CHEBI:16240"/>
        <dbReference type="EC" id="1.11.1.21"/>
    </reaction>
</comment>
<comment type="cofactor">
    <cofactor evidence="1">
        <name>heme b</name>
        <dbReference type="ChEBI" id="CHEBI:60344"/>
    </cofactor>
    <text evidence="1">Binds 1 heme b (iron(II)-protoporphyrin IX) group per dimer.</text>
</comment>
<comment type="subunit">
    <text evidence="1">Homodimer or homotetramer.</text>
</comment>
<comment type="PTM">
    <text evidence="1">Formation of the three residue Trp-Tyr-Met cross-link is important for the catalase, but not the peroxidase activity of the enzyme.</text>
</comment>
<comment type="similarity">
    <text evidence="1">Belongs to the peroxidase family. Peroxidase/catalase subfamily.</text>
</comment>
<evidence type="ECO:0000255" key="1">
    <source>
        <dbReference type="HAMAP-Rule" id="MF_01961"/>
    </source>
</evidence>
<reference key="1">
    <citation type="journal article" date="2000" name="Nature">
        <title>DNA sequence of both chromosomes of the cholera pathogen Vibrio cholerae.</title>
        <authorList>
            <person name="Heidelberg J.F."/>
            <person name="Eisen J.A."/>
            <person name="Nelson W.C."/>
            <person name="Clayton R.A."/>
            <person name="Gwinn M.L."/>
            <person name="Dodson R.J."/>
            <person name="Haft D.H."/>
            <person name="Hickey E.K."/>
            <person name="Peterson J.D."/>
            <person name="Umayam L.A."/>
            <person name="Gill S.R."/>
            <person name="Nelson K.E."/>
            <person name="Read T.D."/>
            <person name="Tettelin H."/>
            <person name="Richardson D.L."/>
            <person name="Ermolaeva M.D."/>
            <person name="Vamathevan J.J."/>
            <person name="Bass S."/>
            <person name="Qin H."/>
            <person name="Dragoi I."/>
            <person name="Sellers P."/>
            <person name="McDonald L.A."/>
            <person name="Utterback T.R."/>
            <person name="Fleischmann R.D."/>
            <person name="Nierman W.C."/>
            <person name="White O."/>
            <person name="Salzberg S.L."/>
            <person name="Smith H.O."/>
            <person name="Colwell R.R."/>
            <person name="Mekalanos J.J."/>
            <person name="Venter J.C."/>
            <person name="Fraser C.M."/>
        </authorList>
    </citation>
    <scope>NUCLEOTIDE SEQUENCE [LARGE SCALE GENOMIC DNA]</scope>
    <source>
        <strain>ATCC 39315 / El Tor Inaba N16961</strain>
    </source>
</reference>
<proteinExistence type="inferred from homology"/>
<sequence length="724" mass="80651">MEHNKAGSSGQCPVMHGGLTSASMSNMDWWPKALNLDILHQHDSKTNPLGADFNYREELKKLDVEALKRDLKALMTNSQEWWPADWGHYGGLMIRMAWHSAGTYRIADGRGGGGTGNQRFAPLNSWPDNANLDKARRLLWPIKQKYGNKISWADLMILAGNMAYESMGLKTFGFAFGREDIWHPEKDIYWGSEKEWLAKSGGENSRYSGQRDLENPLAAVMMGLIYVNPEGVDGNPDPLKTAQDMRVTFARMAMNDEETVALTAGGHTVGKAHGNGKASNLGPDPEGAELHEQGLGWNNHTSRGIGRNTVTSGIEGAWTTHPTRWDNEYFYLLLSYEWQLTKSPAGAWQWEPVNIKEEDKPVDVEDPSIRYNPMMTDADMALKIDPEYRKISERFYKDPAYFSEVFARAWFKLTHRDMGPKARYFGPDVPAEDLIWQDPVPAGRKDYDVNAVKAKIAASGLSISEMVSTAWDSARTFRGSDKRGGANGARIRLAPQKDWEGNEPARLGKVLAVLEKIAAESGISIADTIVLAGNVGIEQAAKAAGVNVTVPFAPGRGDATIEQTDVESFEVLEPLADGFRNWQKKHYVVTPEEMLLDKAQLLRLTAPEMTVLIGGMRVLGTNYGGSQHGVFTDRVGALTNDFFVNLTDMSYTWKPTGRNSYEIVERKSGKVKWTATRVDLVFGSNSILRAYAEVYAQDDNKEKFVKDFVAAWTKVMNADRFDLV</sequence>